<organism>
    <name type="scientific">Bos taurus</name>
    <name type="common">Bovine</name>
    <dbReference type="NCBI Taxonomy" id="9913"/>
    <lineage>
        <taxon>Eukaryota</taxon>
        <taxon>Metazoa</taxon>
        <taxon>Chordata</taxon>
        <taxon>Craniata</taxon>
        <taxon>Vertebrata</taxon>
        <taxon>Euteleostomi</taxon>
        <taxon>Mammalia</taxon>
        <taxon>Eutheria</taxon>
        <taxon>Laurasiatheria</taxon>
        <taxon>Artiodactyla</taxon>
        <taxon>Ruminantia</taxon>
        <taxon>Pecora</taxon>
        <taxon>Bovidae</taxon>
        <taxon>Bovinae</taxon>
        <taxon>Bos</taxon>
    </lineage>
</organism>
<protein>
    <recommendedName>
        <fullName evidence="1">ATP synthase F(0) complex subunit a</fullName>
    </recommendedName>
    <alternativeName>
        <fullName>F-ATPase protein 6</fullName>
    </alternativeName>
    <alternativeName>
        <fullName evidence="1">Proton-conducting channel, ATP synthase F(0) complex subunit a</fullName>
    </alternativeName>
</protein>
<accession>P00847</accession>
<accession>Q8SFX8</accession>
<gene>
    <name evidence="1" type="primary">MT-ATP6</name>
    <name type="synonym">ATP6</name>
    <name type="synonym">ATPASE6</name>
    <name type="synonym">MTATP6</name>
</gene>
<evidence type="ECO:0000250" key="1">
    <source>
        <dbReference type="UniProtKB" id="P00846"/>
    </source>
</evidence>
<evidence type="ECO:0000255" key="2"/>
<evidence type="ECO:0000269" key="3">
    <source>
    </source>
</evidence>
<evidence type="ECO:0000269" key="4">
    <source>
    </source>
</evidence>
<evidence type="ECO:0000305" key="5"/>
<evidence type="ECO:0000312" key="6">
    <source>
        <dbReference type="Proteomes" id="UP000009136"/>
    </source>
</evidence>
<evidence type="ECO:0007829" key="7">
    <source>
        <dbReference type="PDB" id="6ZIT"/>
    </source>
</evidence>
<reference key="1">
    <citation type="journal article" date="1982" name="J. Mol. Biol.">
        <title>Complete sequence of bovine mitochondrial DNA. Conserved features of the mammalian mitochondrial genome.</title>
        <authorList>
            <person name="Anderson S."/>
            <person name="de Bruijn M.H.L."/>
            <person name="Coulson A.R."/>
            <person name="Eperon I.C."/>
            <person name="Sanger F."/>
            <person name="Young I.G."/>
        </authorList>
    </citation>
    <scope>NUCLEOTIDE SEQUENCE [GENOMIC DNA]</scope>
    <source>
        <strain evidence="6">Hereford</strain>
        <tissue>Heart</tissue>
    </source>
</reference>
<reference key="2">
    <citation type="submission" date="2002-03" db="EMBL/GenBank/DDBJ databases">
        <title>Bos taurus mitochondrial protein coding regions.</title>
        <authorList>
            <person name="Wettstein P.J."/>
        </authorList>
    </citation>
    <scope>NUCLEOTIDE SEQUENCE [GENOMIC DNA]</scope>
    <source>
        <strain>65</strain>
        <strain>66</strain>
        <strain>D</strain>
        <strain>F</strain>
    </source>
</reference>
<reference key="3">
    <citation type="journal article" date="1986" name="EMBO J.">
        <title>Two overlapping genes in bovine mitochondrial DNA encode membrane components of ATP synthase.</title>
        <authorList>
            <person name="Fearnley I.M."/>
            <person name="Walker J.E."/>
        </authorList>
    </citation>
    <scope>PROTEIN SEQUENCE OF 1-15</scope>
    <scope>FORMYLATION AT MET-1</scope>
</reference>
<reference key="4">
    <citation type="journal article" date="2007" name="FEBS Lett.">
        <title>Association of two proteolipids of unknown function with ATP synthase from bovine heart mitochondria.</title>
        <authorList>
            <person name="Chen R."/>
            <person name="Runswick M.J."/>
            <person name="Carroll J."/>
            <person name="Fearnley I.M."/>
            <person name="Walker J.E."/>
        </authorList>
    </citation>
    <scope>IDENTIFICATION IN THE ATP SYNTHASE COMPLEX</scope>
</reference>
<comment type="function">
    <text evidence="1">Subunit a, of the mitochondrial membrane ATP synthase complex (F(1)F(0) ATP synthase or Complex V) that produces ATP from ADP in the presence of a proton gradient across the membrane which is generated by electron transport complexes of the respiratory chain. ATP synthase complex consist of a soluble F(1) head domain - the catalytic core - and a membrane F(1) domain - the membrane proton channel. These two domains are linked by a central stalk rotating inside the F(1) region and a stationary peripheral stalk. During catalysis, ATP synthesis in the catalytic domain of F(1) is coupled via a rotary mechanism of the central stalk subunits to proton translocation. With the subunit c (ATP5MC1), forms the proton-conducting channel in the F(0) domain, that contains two crucial half-channels (inlet and outlet) that facilitate proton movement from the mitochondrial intermembrane space (IMS) into the matrix. Protons are taken up via the inlet half-channel and released through the outlet half-channel, following a Grotthuss mechanism.</text>
</comment>
<comment type="catalytic activity">
    <reaction evidence="1">
        <text>H(+)(in) = H(+)(out)</text>
        <dbReference type="Rhea" id="RHEA:34979"/>
        <dbReference type="ChEBI" id="CHEBI:15378"/>
    </reaction>
</comment>
<comment type="subunit">
    <text evidence="1 3">Component of the ATP synthase complex composed at least of ATP5F1A/subunit alpha, ATP5F1B/subunit beta, ATP5MC1/subunit c (homooctomer), MT-ATP6/subunit a, MT-ATP8/subunit 8, ATP5ME/subunit e, ATP5MF/subunit f, ATP5MG/subunit g, ATP5MK/subunit k, ATP5MJ/subunit j, ATP5F1C/subunit gamma, ATP5F1D/subunit delta, ATP5F1E/subunit epsilon, ATP5PF/subunit F6, ATP5PB/subunit b, ATP5PD/subunit d, ATP5PO/subunit OSCP (PubMed:17570365). ATP synthase complex consists of a soluble F(1) head domain (subunits alpha(3) and beta(3)) - the catalytic core - and a membrane F(0) domain - the membrane proton channel (subunits c, a, 8, e, f, g, k and j). These two domains are linked by a central stalk (subunits gamma, delta, and epsilon) rotating inside the F1 region and a stationary peripheral stalk (subunits F6, b, d, and OSCP). Interacts with DNAJC30; interaction is direct (By similarity).</text>
</comment>
<comment type="subcellular location">
    <subcellularLocation>
        <location>Mitochondrion inner membrane</location>
        <topology>Multi-pass membrane protein</topology>
    </subcellularLocation>
</comment>
<comment type="similarity">
    <text evidence="5">Belongs to the ATPase A chain family.</text>
</comment>
<feature type="chain" id="PRO_0000082094" description="ATP synthase F(0) complex subunit a">
    <location>
        <begin position="1"/>
        <end position="226"/>
    </location>
</feature>
<feature type="transmembrane region" description="Helical" evidence="2">
    <location>
        <begin position="9"/>
        <end position="29"/>
    </location>
</feature>
<feature type="transmembrane region" description="Helical" evidence="2">
    <location>
        <begin position="68"/>
        <end position="88"/>
    </location>
</feature>
<feature type="transmembrane region" description="Helical" evidence="2">
    <location>
        <begin position="97"/>
        <end position="117"/>
    </location>
</feature>
<feature type="transmembrane region" description="Helical" evidence="2">
    <location>
        <begin position="138"/>
        <end position="158"/>
    </location>
</feature>
<feature type="transmembrane region" description="Helical" evidence="2">
    <location>
        <begin position="164"/>
        <end position="184"/>
    </location>
</feature>
<feature type="transmembrane region" description="Helical" evidence="2">
    <location>
        <begin position="189"/>
        <end position="209"/>
    </location>
</feature>
<feature type="modified residue" description="N-formylmethionine" evidence="4">
    <location>
        <position position="1"/>
    </location>
</feature>
<feature type="sequence variant" description="In strain: 65.">
    <original>S</original>
    <variation>N</variation>
    <location>
        <position position="59"/>
    </location>
</feature>
<feature type="strand" evidence="7">
    <location>
        <begin position="3"/>
        <end position="5"/>
    </location>
</feature>
<feature type="helix" evidence="7">
    <location>
        <begin position="6"/>
        <end position="9"/>
    </location>
</feature>
<feature type="strand" evidence="7">
    <location>
        <begin position="14"/>
        <end position="17"/>
    </location>
</feature>
<feature type="helix" evidence="7">
    <location>
        <begin position="20"/>
        <end position="25"/>
    </location>
</feature>
<feature type="helix" evidence="7">
    <location>
        <begin position="28"/>
        <end position="30"/>
    </location>
</feature>
<feature type="helix" evidence="7">
    <location>
        <begin position="41"/>
        <end position="58"/>
    </location>
</feature>
<feature type="helix" evidence="7">
    <location>
        <begin position="63"/>
        <end position="86"/>
    </location>
</feature>
<feature type="helix" evidence="7">
    <location>
        <begin position="94"/>
        <end position="96"/>
    </location>
</feature>
<feature type="helix" evidence="7">
    <location>
        <begin position="98"/>
        <end position="119"/>
    </location>
</feature>
<feature type="helix" evidence="7">
    <location>
        <begin position="121"/>
        <end position="127"/>
    </location>
</feature>
<feature type="helix" evidence="7">
    <location>
        <begin position="135"/>
        <end position="137"/>
    </location>
</feature>
<feature type="helix" evidence="7">
    <location>
        <begin position="138"/>
        <end position="181"/>
    </location>
</feature>
<feature type="helix" evidence="7">
    <location>
        <begin position="186"/>
        <end position="224"/>
    </location>
</feature>
<keyword id="KW-0002">3D-structure</keyword>
<keyword id="KW-0066">ATP synthesis</keyword>
<keyword id="KW-0138">CF(0)</keyword>
<keyword id="KW-0903">Direct protein sequencing</keyword>
<keyword id="KW-0291">Formylation</keyword>
<keyword id="KW-0375">Hydrogen ion transport</keyword>
<keyword id="KW-0406">Ion transport</keyword>
<keyword id="KW-0472">Membrane</keyword>
<keyword id="KW-0496">Mitochondrion</keyword>
<keyword id="KW-0999">Mitochondrion inner membrane</keyword>
<keyword id="KW-1185">Reference proteome</keyword>
<keyword id="KW-0812">Transmembrane</keyword>
<keyword id="KW-1133">Transmembrane helix</keyword>
<keyword id="KW-0813">Transport</keyword>
<name>ATP6_BOVIN</name>
<sequence>MNENLFTSFITPVILGLPLVTLIVLFPSLLFPTSNRLVSNRFVTLQQWMLQLVSKQMMSIHNSKGQTWTLMLMSLILFIGSTNLLGLLPHSFTPTTQLSMNLGMAIPLWAGAVITGFRNKTKASLAHFLPQGTPTPLIPMLVIIETISLFIQPMALAVRLTANITAGHLLIHLIGGATLALMSISTTTALITFTILILLTILEFAVAMIQAYVFTLLVSLYLHDNT</sequence>
<geneLocation type="mitochondrion"/>
<proteinExistence type="evidence at protein level"/>
<dbReference type="EMBL" id="V00654">
    <property type="protein sequence ID" value="CAA24002.1"/>
    <property type="molecule type" value="Genomic_DNA"/>
</dbReference>
<dbReference type="EMBL" id="AF490528">
    <property type="protein sequence ID" value="AAM08334.1"/>
    <property type="molecule type" value="Genomic_DNA"/>
</dbReference>
<dbReference type="EMBL" id="AF490529">
    <property type="protein sequence ID" value="AAM08347.1"/>
    <property type="molecule type" value="Genomic_DNA"/>
</dbReference>
<dbReference type="EMBL" id="AF493541">
    <property type="protein sequence ID" value="AAM12794.1"/>
    <property type="molecule type" value="Genomic_DNA"/>
</dbReference>
<dbReference type="EMBL" id="AF493542">
    <property type="protein sequence ID" value="AAM12807.1"/>
    <property type="molecule type" value="Genomic_DNA"/>
</dbReference>
<dbReference type="PIR" id="A01050">
    <property type="entry name" value="PWBO6"/>
</dbReference>
<dbReference type="RefSeq" id="YP_209210.1">
    <property type="nucleotide sequence ID" value="NC_006853.1"/>
</dbReference>
<dbReference type="PDB" id="5ARA">
    <property type="method" value="EM"/>
    <property type="resolution" value="6.70 A"/>
    <property type="chains" value="W=10-226"/>
</dbReference>
<dbReference type="PDB" id="5ARE">
    <property type="method" value="EM"/>
    <property type="resolution" value="7.40 A"/>
    <property type="chains" value="W=10-226"/>
</dbReference>
<dbReference type="PDB" id="5ARH">
    <property type="method" value="EM"/>
    <property type="resolution" value="7.20 A"/>
    <property type="chains" value="W=10-226"/>
</dbReference>
<dbReference type="PDB" id="5ARI">
    <property type="method" value="EM"/>
    <property type="resolution" value="7.40 A"/>
    <property type="chains" value="W=10-226"/>
</dbReference>
<dbReference type="PDB" id="5FIJ">
    <property type="method" value="EM"/>
    <property type="resolution" value="7.40 A"/>
    <property type="chains" value="W=10-226"/>
</dbReference>
<dbReference type="PDB" id="5FIK">
    <property type="method" value="EM"/>
    <property type="resolution" value="6.40 A"/>
    <property type="chains" value="W=10-226"/>
</dbReference>
<dbReference type="PDB" id="5FIL">
    <property type="method" value="EM"/>
    <property type="resolution" value="7.10 A"/>
    <property type="chains" value="W=10-226"/>
</dbReference>
<dbReference type="PDB" id="6ZBB">
    <property type="method" value="EM"/>
    <property type="resolution" value="3.61 A"/>
    <property type="chains" value="a=1-226"/>
</dbReference>
<dbReference type="PDB" id="6ZIQ">
    <property type="method" value="EM"/>
    <property type="resolution" value="4.33 A"/>
    <property type="chains" value="a=1-226"/>
</dbReference>
<dbReference type="PDB" id="6ZIT">
    <property type="method" value="EM"/>
    <property type="resolution" value="3.49 A"/>
    <property type="chains" value="a=1-226"/>
</dbReference>
<dbReference type="PDB" id="6ZIU">
    <property type="method" value="EM"/>
    <property type="resolution" value="6.02 A"/>
    <property type="chains" value="a=1-226"/>
</dbReference>
<dbReference type="PDB" id="6ZPO">
    <property type="method" value="EM"/>
    <property type="resolution" value="4.00 A"/>
    <property type="chains" value="a=1-226"/>
</dbReference>
<dbReference type="PDB" id="6ZQM">
    <property type="method" value="EM"/>
    <property type="resolution" value="3.29 A"/>
    <property type="chains" value="a=1-226"/>
</dbReference>
<dbReference type="PDB" id="6ZQN">
    <property type="method" value="EM"/>
    <property type="resolution" value="4.00 A"/>
    <property type="chains" value="a=1-226"/>
</dbReference>
<dbReference type="PDB" id="7AJB">
    <property type="method" value="EM"/>
    <property type="resolution" value="9.20 A"/>
    <property type="chains" value="Aa/a=1-226"/>
</dbReference>
<dbReference type="PDB" id="7AJC">
    <property type="method" value="EM"/>
    <property type="resolution" value="11.90 A"/>
    <property type="chains" value="Aa/a=1-226"/>
</dbReference>
<dbReference type="PDB" id="7AJD">
    <property type="method" value="EM"/>
    <property type="resolution" value="9.00 A"/>
    <property type="chains" value="Aa/a=1-226"/>
</dbReference>
<dbReference type="PDB" id="7AJE">
    <property type="method" value="EM"/>
    <property type="resolution" value="9.40 A"/>
    <property type="chains" value="Aa/a=1-226"/>
</dbReference>
<dbReference type="PDB" id="7AJF">
    <property type="method" value="EM"/>
    <property type="resolution" value="8.45 A"/>
    <property type="chains" value="Aa/a=1-226"/>
</dbReference>
<dbReference type="PDB" id="7AJG">
    <property type="method" value="EM"/>
    <property type="resolution" value="10.70 A"/>
    <property type="chains" value="Aa/a=1-226"/>
</dbReference>
<dbReference type="PDB" id="7AJH">
    <property type="method" value="EM"/>
    <property type="resolution" value="9.70 A"/>
    <property type="chains" value="Aa/a=1-226"/>
</dbReference>
<dbReference type="PDB" id="7AJI">
    <property type="method" value="EM"/>
    <property type="resolution" value="11.40 A"/>
    <property type="chains" value="Aa/a=1-226"/>
</dbReference>
<dbReference type="PDB" id="7AJJ">
    <property type="method" value="EM"/>
    <property type="resolution" value="13.10 A"/>
    <property type="chains" value="Aa/a=1-226"/>
</dbReference>
<dbReference type="PDBsum" id="5ARA"/>
<dbReference type="PDBsum" id="5ARE"/>
<dbReference type="PDBsum" id="5ARH"/>
<dbReference type="PDBsum" id="5ARI"/>
<dbReference type="PDBsum" id="5FIJ"/>
<dbReference type="PDBsum" id="5FIK"/>
<dbReference type="PDBsum" id="5FIL"/>
<dbReference type="PDBsum" id="6ZBB"/>
<dbReference type="PDBsum" id="6ZIQ"/>
<dbReference type="PDBsum" id="6ZIT"/>
<dbReference type="PDBsum" id="6ZIU"/>
<dbReference type="PDBsum" id="6ZPO"/>
<dbReference type="PDBsum" id="6ZQM"/>
<dbReference type="PDBsum" id="6ZQN"/>
<dbReference type="PDBsum" id="7AJB"/>
<dbReference type="PDBsum" id="7AJC"/>
<dbReference type="PDBsum" id="7AJD"/>
<dbReference type="PDBsum" id="7AJE"/>
<dbReference type="PDBsum" id="7AJF"/>
<dbReference type="PDBsum" id="7AJG"/>
<dbReference type="PDBsum" id="7AJH"/>
<dbReference type="PDBsum" id="7AJI"/>
<dbReference type="PDBsum" id="7AJJ"/>
<dbReference type="EMDB" id="EMD-11149"/>
<dbReference type="EMDB" id="EMD-11228"/>
<dbReference type="EMDB" id="EMD-11229"/>
<dbReference type="EMDB" id="EMD-11230"/>
<dbReference type="EMDB" id="EMD-11342"/>
<dbReference type="EMDB" id="EMD-11368"/>
<dbReference type="EMDB" id="EMD-11369"/>
<dbReference type="EMDB" id="EMD-11428"/>
<dbReference type="EMDB" id="EMD-11429"/>
<dbReference type="EMDB" id="EMD-11430"/>
<dbReference type="SMR" id="P00847"/>
<dbReference type="CORUM" id="P00847"/>
<dbReference type="FunCoup" id="P00847">
    <property type="interactions" value="106"/>
</dbReference>
<dbReference type="IntAct" id="P00847">
    <property type="interactions" value="1"/>
</dbReference>
<dbReference type="MINT" id="P00847"/>
<dbReference type="STRING" id="9913.ENSBTAP00000053155"/>
<dbReference type="PaxDb" id="9913-ENSBTAP00000053155"/>
<dbReference type="Ensembl" id="ENSBTAT00000060539.1">
    <property type="protein sequence ID" value="ENSBTAP00000053155.1"/>
    <property type="gene ID" value="ENSBTAG00000043584.1"/>
</dbReference>
<dbReference type="GeneID" id="3283882"/>
<dbReference type="KEGG" id="bta:3283882"/>
<dbReference type="CTD" id="4508"/>
<dbReference type="VEuPathDB" id="HostDB:ENSBTAG00000043584"/>
<dbReference type="VGNC" id="VGNC:55736">
    <property type="gene designation" value="MT-ATP6"/>
</dbReference>
<dbReference type="eggNOG" id="KOG4665">
    <property type="taxonomic scope" value="Eukaryota"/>
</dbReference>
<dbReference type="GeneTree" id="ENSGT00390000005568"/>
<dbReference type="HOGENOM" id="CLU_041018_0_2_1"/>
<dbReference type="InParanoid" id="P00847"/>
<dbReference type="OMA" id="FFDQFMS"/>
<dbReference type="OrthoDB" id="5976622at2759"/>
<dbReference type="TreeFam" id="TF343395"/>
<dbReference type="Reactome" id="R-BTA-163210">
    <property type="pathway name" value="Formation of ATP by chemiosmotic coupling"/>
</dbReference>
<dbReference type="Reactome" id="R-BTA-8949613">
    <property type="pathway name" value="Cristae formation"/>
</dbReference>
<dbReference type="Reactome" id="R-BTA-9837999">
    <property type="pathway name" value="Mitochondrial protein degradation"/>
</dbReference>
<dbReference type="EvolutionaryTrace" id="P00847"/>
<dbReference type="Proteomes" id="UP000009136">
    <property type="component" value="Mitochondrion MT"/>
</dbReference>
<dbReference type="Bgee" id="ENSBTAG00000043584">
    <property type="expression patterns" value="Expressed in ureter and 103 other cell types or tissues"/>
</dbReference>
<dbReference type="GO" id="GO:0005743">
    <property type="term" value="C:mitochondrial inner membrane"/>
    <property type="evidence" value="ECO:0007669"/>
    <property type="project" value="UniProtKB-SubCell"/>
</dbReference>
<dbReference type="GO" id="GO:0045259">
    <property type="term" value="C:proton-transporting ATP synthase complex"/>
    <property type="evidence" value="ECO:0000314"/>
    <property type="project" value="UniProtKB"/>
</dbReference>
<dbReference type="GO" id="GO:0015252">
    <property type="term" value="F:proton channel activity"/>
    <property type="evidence" value="ECO:0000250"/>
    <property type="project" value="UniProtKB"/>
</dbReference>
<dbReference type="GO" id="GO:0046933">
    <property type="term" value="F:proton-transporting ATP synthase activity, rotational mechanism"/>
    <property type="evidence" value="ECO:0007669"/>
    <property type="project" value="Ensembl"/>
</dbReference>
<dbReference type="GO" id="GO:0015986">
    <property type="term" value="P:proton motive force-driven ATP synthesis"/>
    <property type="evidence" value="ECO:0000250"/>
    <property type="project" value="UniProtKB"/>
</dbReference>
<dbReference type="GO" id="GO:0042776">
    <property type="term" value="P:proton motive force-driven mitochondrial ATP synthesis"/>
    <property type="evidence" value="ECO:0007669"/>
    <property type="project" value="Ensembl"/>
</dbReference>
<dbReference type="GO" id="GO:1902600">
    <property type="term" value="P:proton transmembrane transport"/>
    <property type="evidence" value="ECO:0000250"/>
    <property type="project" value="UniProtKB"/>
</dbReference>
<dbReference type="CDD" id="cd00310">
    <property type="entry name" value="ATP-synt_Fo_a_6"/>
    <property type="match status" value="1"/>
</dbReference>
<dbReference type="FunFam" id="1.20.120.220:FF:000004">
    <property type="entry name" value="ATP synthase subunit a"/>
    <property type="match status" value="1"/>
</dbReference>
<dbReference type="Gene3D" id="1.20.120.220">
    <property type="entry name" value="ATP synthase, F0 complex, subunit A"/>
    <property type="match status" value="1"/>
</dbReference>
<dbReference type="InterPro" id="IPR000568">
    <property type="entry name" value="ATP_synth_F0_asu"/>
</dbReference>
<dbReference type="InterPro" id="IPR023011">
    <property type="entry name" value="ATP_synth_F0_asu_AS"/>
</dbReference>
<dbReference type="InterPro" id="IPR045083">
    <property type="entry name" value="ATP_synth_F0_asu_bact/mt"/>
</dbReference>
<dbReference type="InterPro" id="IPR035908">
    <property type="entry name" value="F0_ATP_A_sf"/>
</dbReference>
<dbReference type="NCBIfam" id="TIGR01131">
    <property type="entry name" value="ATP_synt_6_or_A"/>
    <property type="match status" value="1"/>
</dbReference>
<dbReference type="PANTHER" id="PTHR11410">
    <property type="entry name" value="ATP SYNTHASE SUBUNIT A"/>
    <property type="match status" value="1"/>
</dbReference>
<dbReference type="PANTHER" id="PTHR11410:SF0">
    <property type="entry name" value="ATP SYNTHASE SUBUNIT A"/>
    <property type="match status" value="1"/>
</dbReference>
<dbReference type="Pfam" id="PF00119">
    <property type="entry name" value="ATP-synt_A"/>
    <property type="match status" value="1"/>
</dbReference>
<dbReference type="PRINTS" id="PR00123">
    <property type="entry name" value="ATPASEA"/>
</dbReference>
<dbReference type="SUPFAM" id="SSF81336">
    <property type="entry name" value="F1F0 ATP synthase subunit A"/>
    <property type="match status" value="1"/>
</dbReference>
<dbReference type="PROSITE" id="PS00449">
    <property type="entry name" value="ATPASE_A"/>
    <property type="match status" value="1"/>
</dbReference>